<evidence type="ECO:0000250" key="1"/>
<evidence type="ECO:0000269" key="2">
    <source>
    </source>
</evidence>
<evidence type="ECO:0000305" key="3"/>
<organismHost>
    <name type="scientific">Escherichia coli</name>
    <dbReference type="NCBI Taxonomy" id="562"/>
</organismHost>
<comment type="function">
    <text>The A subunit is responsible for inhibiting protein synthesis through the catalytic inactivation of 60S ribosomal subunits. After endocytosis, the A subunit is cleaved by furin in two fragments, A1 and A2: A1 is the catalytically active fragment, and A2 is essential for holotoxin assembly with the B subunits.</text>
</comment>
<comment type="catalytic activity">
    <reaction>
        <text>Endohydrolysis of the N-glycosidic bond at one specific adenosine on the 28S rRNA.</text>
        <dbReference type="EC" id="3.2.2.22"/>
    </reaction>
</comment>
<comment type="subunit">
    <text>Shiga-like toxin contains a single subunit A and five copies of subunit B.</text>
</comment>
<comment type="subcellular location">
    <subcellularLocation>
        <location>Secreted</location>
    </subcellularLocation>
</comment>
<comment type="similarity">
    <text evidence="3">Belongs to the ribosome-inactivating protein family.</text>
</comment>
<reference key="1">
    <citation type="journal article" date="1987" name="Proc. Natl. Acad. Sci. U.S.A.">
        <title>Nucleotide sequence of the Shiga-like toxin genes of Escherichia coli.</title>
        <authorList>
            <person name="Calderwood S.B."/>
            <person name="Auclair F."/>
            <person name="Donohue-Rolfe A."/>
            <person name="Keusch G.T."/>
            <person name="Mekalanos J.J."/>
        </authorList>
    </citation>
    <scope>NUCLEOTIDE SEQUENCE [GENOMIC DNA]</scope>
</reference>
<reference key="2">
    <citation type="journal article" date="1987" name="J. Bacteriol.">
        <title>Nucleotide sequence and promoter mapping of the Escherichia coli Shiga-like toxin operon of bacteriophage H-19B.</title>
        <authorList>
            <person name="de Grandis S."/>
            <person name="Ginsberg J."/>
            <person name="Toone M."/>
            <person name="Climie S."/>
            <person name="Friesen J."/>
            <person name="Brunton J.L."/>
        </authorList>
    </citation>
    <scope>NUCLEOTIDE SEQUENCE [GENOMIC DNA]</scope>
</reference>
<reference key="3">
    <citation type="journal article" date="1988" name="Proc. Natl. Acad. Sci. U.S.A.">
        <title>Evidence that glutamic acid 167 is an active-site residue of Shiga-like toxin I.</title>
        <authorList>
            <person name="Hovde C.J."/>
            <person name="Calderwood S.B."/>
            <person name="Mekalanos J.J."/>
            <person name="Collier R.J."/>
        </authorList>
    </citation>
    <scope>ACTIVE SITE</scope>
</reference>
<reference key="4">
    <citation type="journal article" date="1994" name="Infect. Immun.">
        <title>Evidence that the A2 fragment of Shiga-like toxin type I is required for holotoxin integrity.</title>
        <authorList>
            <person name="Austin P.R."/>
            <person name="Jablonski P.E."/>
            <person name="Bohach G.A."/>
            <person name="Dunker A.K."/>
            <person name="Hovde C.J."/>
        </authorList>
    </citation>
    <scope>ROLE OF A2 FRAGMENT IN HOLOTOXIN ASSEMBLY</scope>
</reference>
<accession>P08026</accession>
<sequence>MKIIIFRVLTFFFVIFSVNVVAKEFTLDFSTAKTYVDSLNVIRSAIGTPLQTISSGGTSLLMIDSGSGDNLFAVDVRGIDPEEGRFNNLRLIVERNNLYVTGFVNRTNNVFYRFADFSHVTFPGTTAVTLSGDSSYTTLQRVAGISRTGMQINRHSLTTSYLDLMSHSGTSLTQSVARAMLRFVTVTAEALRFRQIQRGFRTTLDDLSGRSYVMTAEDVDLTLNWGRLSSVLPDYHGQDSVRVGRISFGSINAILGSVALILNCHHHASRVARMASDEFPSMCPADGRVRGITHNKILWDSSTLGAILMRRTISS</sequence>
<feature type="signal peptide">
    <location>
        <begin position="1"/>
        <end position="22"/>
    </location>
</feature>
<feature type="chain" id="PRO_0000030791" description="Shiga-like toxin 1 subunit A">
    <location>
        <begin position="23"/>
        <end position="315"/>
    </location>
</feature>
<feature type="region of interest" description="A1" evidence="1">
    <location>
        <begin position="23"/>
        <end position="273"/>
    </location>
</feature>
<feature type="region of interest" description="A2" evidence="1">
    <location>
        <begin position="274"/>
        <end position="315"/>
    </location>
</feature>
<feature type="active site" evidence="2">
    <location>
        <position position="189"/>
    </location>
</feature>
<feature type="site" description="Cleavage; by furin" evidence="1">
    <location>
        <begin position="273"/>
        <end position="274"/>
    </location>
</feature>
<feature type="disulfide bond" evidence="1">
    <location>
        <begin position="264"/>
        <end position="283"/>
    </location>
</feature>
<protein>
    <recommendedName>
        <fullName>Shiga-like toxin 1 subunit A</fullName>
        <shortName>SLT-1 A subunit</shortName>
        <shortName>SLT-1a</shortName>
        <shortName>SLT-Ia</shortName>
        <ecNumber>3.2.2.22</ecNumber>
    </recommendedName>
    <alternativeName>
        <fullName>Verocytotoxin 1 subunit A</fullName>
    </alternativeName>
    <alternativeName>
        <fullName>Verotoxin 1 subunit A</fullName>
    </alternativeName>
    <alternativeName>
        <fullName>rRNA N-glycosidase 1</fullName>
    </alternativeName>
</protein>
<proteinExistence type="inferred from homology"/>
<keyword id="KW-1015">Disulfide bond</keyword>
<keyword id="KW-0378">Hydrolase</keyword>
<keyword id="KW-1254">Modulation of host virulence by virus</keyword>
<keyword id="KW-0652">Protein synthesis inhibitor</keyword>
<keyword id="KW-0964">Secreted</keyword>
<keyword id="KW-0732">Signal</keyword>
<keyword id="KW-0800">Toxin</keyword>
<keyword id="KW-1255">Viral exotoxin</keyword>
<keyword id="KW-0843">Virulence</keyword>
<dbReference type="EC" id="3.2.2.22"/>
<dbReference type="EMBL" id="M16625">
    <property type="protein sequence ID" value="AAA98099.1"/>
    <property type="molecule type" value="Genomic_DNA"/>
</dbReference>
<dbReference type="EMBL" id="M17358">
    <property type="protein sequence ID" value="AAA32229.1"/>
    <property type="molecule type" value="Genomic_DNA"/>
</dbReference>
<dbReference type="PIR" id="A27052">
    <property type="entry name" value="XUBPH9"/>
</dbReference>
<dbReference type="PIR" id="A53887">
    <property type="entry name" value="A53887"/>
</dbReference>
<dbReference type="SMR" id="P08026"/>
<dbReference type="GO" id="GO:0005576">
    <property type="term" value="C:extracellular region"/>
    <property type="evidence" value="ECO:0007669"/>
    <property type="project" value="UniProtKB-SubCell"/>
</dbReference>
<dbReference type="GO" id="GO:0030598">
    <property type="term" value="F:rRNA N-glycosylase activity"/>
    <property type="evidence" value="ECO:0007669"/>
    <property type="project" value="UniProtKB-EC"/>
</dbReference>
<dbReference type="GO" id="GO:0090729">
    <property type="term" value="F:toxin activity"/>
    <property type="evidence" value="ECO:0007669"/>
    <property type="project" value="UniProtKB-KW"/>
</dbReference>
<dbReference type="GO" id="GO:0017148">
    <property type="term" value="P:negative regulation of translation"/>
    <property type="evidence" value="ECO:0007669"/>
    <property type="project" value="UniProtKB-KW"/>
</dbReference>
<dbReference type="GO" id="GO:0098676">
    <property type="term" value="P:symbiont-mediated modulation of host virulence"/>
    <property type="evidence" value="ECO:0007669"/>
    <property type="project" value="UniProtKB-KW"/>
</dbReference>
<dbReference type="Gene3D" id="3.40.420.10">
    <property type="entry name" value="Ricin (A subunit), domain 1"/>
    <property type="match status" value="1"/>
</dbReference>
<dbReference type="Gene3D" id="4.10.470.10">
    <property type="entry name" value="Ricin (A Subunit), domain 2"/>
    <property type="match status" value="1"/>
</dbReference>
<dbReference type="InterPro" id="IPR036041">
    <property type="entry name" value="Ribosome-inact_prot_sf"/>
</dbReference>
<dbReference type="InterPro" id="IPR001574">
    <property type="entry name" value="Ribosome_inactivat_prot"/>
</dbReference>
<dbReference type="InterPro" id="IPR017988">
    <property type="entry name" value="Ribosome_inactivat_prot_CS"/>
</dbReference>
<dbReference type="InterPro" id="IPR016138">
    <property type="entry name" value="Ribosome_inactivat_prot_sub1"/>
</dbReference>
<dbReference type="InterPro" id="IPR016139">
    <property type="entry name" value="Ribosome_inactivat_prot_sub2"/>
</dbReference>
<dbReference type="InterPro" id="IPR016331">
    <property type="entry name" value="Shiga-like_toxin_subunit_A"/>
</dbReference>
<dbReference type="NCBIfam" id="NF041694">
    <property type="entry name" value="Shig_StxA_1a"/>
    <property type="match status" value="1"/>
</dbReference>
<dbReference type="NCBIfam" id="NF033658">
    <property type="entry name" value="Shiga_Stx1A"/>
    <property type="match status" value="1"/>
</dbReference>
<dbReference type="PANTHER" id="PTHR33453">
    <property type="match status" value="1"/>
</dbReference>
<dbReference type="PANTHER" id="PTHR33453:SF34">
    <property type="entry name" value="RIBOSOME-INACTIVATING PROTEIN"/>
    <property type="match status" value="1"/>
</dbReference>
<dbReference type="Pfam" id="PF00161">
    <property type="entry name" value="RIP"/>
    <property type="match status" value="1"/>
</dbReference>
<dbReference type="PIRSF" id="PIRSF001924">
    <property type="entry name" value="Shigella_toxin_subunit_A"/>
    <property type="match status" value="1"/>
</dbReference>
<dbReference type="SUPFAM" id="SSF56371">
    <property type="entry name" value="Ribosome inactivating proteins (RIP)"/>
    <property type="match status" value="1"/>
</dbReference>
<dbReference type="PROSITE" id="PS00275">
    <property type="entry name" value="SHIGA_RICIN"/>
    <property type="match status" value="1"/>
</dbReference>
<name>STXA_BPH19</name>
<organism>
    <name type="scientific">Enterobacteria phage H19B</name>
    <name type="common">Bacteriophage H19B</name>
    <dbReference type="NCBI Taxonomy" id="69932"/>
    <lineage>
        <taxon>Viruses</taxon>
        <taxon>Duplodnaviria</taxon>
        <taxon>Heunggongvirae</taxon>
        <taxon>Uroviricota</taxon>
        <taxon>Caudoviricetes</taxon>
        <taxon>Lambdavirus</taxon>
    </lineage>
</organism>
<gene>
    <name type="primary">stxA</name>
    <name type="synonym">sltA</name>
</gene>